<feature type="signal peptide" evidence="5">
    <location>
        <begin position="1"/>
        <end position="27"/>
    </location>
</feature>
<feature type="propeptide" id="PRO_0000401452" evidence="2">
    <location>
        <begin position="28"/>
        <end position="89"/>
    </location>
</feature>
<feature type="peptide" id="PRO_0000401453" description="GLV4p">
    <location>
        <begin position="90"/>
        <end position="102"/>
    </location>
</feature>
<feature type="region of interest" description="Disordered" evidence="6">
    <location>
        <begin position="56"/>
        <end position="78"/>
    </location>
</feature>
<feature type="modified residue" description="Sulfotyrosine" evidence="2">
    <location>
        <position position="91"/>
    </location>
</feature>
<feature type="modified residue" description="Hydroxyproline" evidence="1">
    <location>
        <position position="99"/>
    </location>
</feature>
<gene>
    <name evidence="12" type="primary">GLV4</name>
    <name evidence="11" type="synonym">CLEL4</name>
    <name evidence="10" type="synonym">RGF7</name>
    <name evidence="15" type="ordered locus">At3g02240</name>
    <name evidence="16" type="ORF">F14P3.11</name>
</gene>
<keyword id="KW-0221">Differentiation</keyword>
<keyword id="KW-0339">Growth factor</keyword>
<keyword id="KW-0379">Hydroxylation</keyword>
<keyword id="KW-1185">Reference proteome</keyword>
<keyword id="KW-0964">Secreted</keyword>
<keyword id="KW-0732">Signal</keyword>
<keyword id="KW-0765">Sulfation</keyword>
<organism>
    <name type="scientific">Arabidopsis thaliana</name>
    <name type="common">Mouse-ear cress</name>
    <dbReference type="NCBI Taxonomy" id="3702"/>
    <lineage>
        <taxon>Eukaryota</taxon>
        <taxon>Viridiplantae</taxon>
        <taxon>Streptophyta</taxon>
        <taxon>Embryophyta</taxon>
        <taxon>Tracheophyta</taxon>
        <taxon>Spermatophyta</taxon>
        <taxon>Magnoliopsida</taxon>
        <taxon>eudicotyledons</taxon>
        <taxon>Gunneridae</taxon>
        <taxon>Pentapetalae</taxon>
        <taxon>rosids</taxon>
        <taxon>malvids</taxon>
        <taxon>Brassicales</taxon>
        <taxon>Brassicaceae</taxon>
        <taxon>Camelineae</taxon>
        <taxon>Arabidopsis</taxon>
    </lineage>
</organism>
<evidence type="ECO:0000250" key="1">
    <source>
        <dbReference type="UniProtKB" id="O49519"/>
    </source>
</evidence>
<evidence type="ECO:0000250" key="2">
    <source>
        <dbReference type="UniProtKB" id="Q3E880"/>
    </source>
</evidence>
<evidence type="ECO:0000250" key="3">
    <source>
        <dbReference type="UniProtKB" id="Q93VK8"/>
    </source>
</evidence>
<evidence type="ECO:0000250" key="4">
    <source>
        <dbReference type="UniProtKB" id="Q9LI64"/>
    </source>
</evidence>
<evidence type="ECO:0000255" key="5"/>
<evidence type="ECO:0000256" key="6">
    <source>
        <dbReference type="SAM" id="MobiDB-lite"/>
    </source>
</evidence>
<evidence type="ECO:0000269" key="7">
    <source>
    </source>
</evidence>
<evidence type="ECO:0000269" key="8">
    <source>
    </source>
</evidence>
<evidence type="ECO:0000269" key="9">
    <source>
    </source>
</evidence>
<evidence type="ECO:0000303" key="10">
    <source>
    </source>
</evidence>
<evidence type="ECO:0000303" key="11">
    <source>
    </source>
</evidence>
<evidence type="ECO:0000303" key="12">
    <source>
    </source>
</evidence>
<evidence type="ECO:0000305" key="13"/>
<evidence type="ECO:0000305" key="14">
    <source>
    </source>
</evidence>
<evidence type="ECO:0000312" key="15">
    <source>
        <dbReference type="Araport" id="AT3G02240"/>
    </source>
</evidence>
<evidence type="ECO:0000312" key="16">
    <source>
        <dbReference type="EMBL" id="AAF02114.1"/>
    </source>
</evidence>
<name>GLV4_ARATH</name>
<reference key="1">
    <citation type="journal article" date="2000" name="Nature">
        <title>Sequence and analysis of chromosome 3 of the plant Arabidopsis thaliana.</title>
        <authorList>
            <person name="Salanoubat M."/>
            <person name="Lemcke K."/>
            <person name="Rieger M."/>
            <person name="Ansorge W."/>
            <person name="Unseld M."/>
            <person name="Fartmann B."/>
            <person name="Valle G."/>
            <person name="Bloecker H."/>
            <person name="Perez-Alonso M."/>
            <person name="Obermaier B."/>
            <person name="Delseny M."/>
            <person name="Boutry M."/>
            <person name="Grivell L.A."/>
            <person name="Mache R."/>
            <person name="Puigdomenech P."/>
            <person name="De Simone V."/>
            <person name="Choisne N."/>
            <person name="Artiguenave F."/>
            <person name="Robert C."/>
            <person name="Brottier P."/>
            <person name="Wincker P."/>
            <person name="Cattolico L."/>
            <person name="Weissenbach J."/>
            <person name="Saurin W."/>
            <person name="Quetier F."/>
            <person name="Schaefer M."/>
            <person name="Mueller-Auer S."/>
            <person name="Gabel C."/>
            <person name="Fuchs M."/>
            <person name="Benes V."/>
            <person name="Wurmbach E."/>
            <person name="Drzonek H."/>
            <person name="Erfle H."/>
            <person name="Jordan N."/>
            <person name="Bangert S."/>
            <person name="Wiedelmann R."/>
            <person name="Kranz H."/>
            <person name="Voss H."/>
            <person name="Holland R."/>
            <person name="Brandt P."/>
            <person name="Nyakatura G."/>
            <person name="Vezzi A."/>
            <person name="D'Angelo M."/>
            <person name="Pallavicini A."/>
            <person name="Toppo S."/>
            <person name="Simionati B."/>
            <person name="Conrad A."/>
            <person name="Hornischer K."/>
            <person name="Kauer G."/>
            <person name="Loehnert T.-H."/>
            <person name="Nordsiek G."/>
            <person name="Reichelt J."/>
            <person name="Scharfe M."/>
            <person name="Schoen O."/>
            <person name="Bargues M."/>
            <person name="Terol J."/>
            <person name="Climent J."/>
            <person name="Navarro P."/>
            <person name="Collado C."/>
            <person name="Perez-Perez A."/>
            <person name="Ottenwaelder B."/>
            <person name="Duchemin D."/>
            <person name="Cooke R."/>
            <person name="Laudie M."/>
            <person name="Berger-Llauro C."/>
            <person name="Purnelle B."/>
            <person name="Masuy D."/>
            <person name="de Haan M."/>
            <person name="Maarse A.C."/>
            <person name="Alcaraz J.-P."/>
            <person name="Cottet A."/>
            <person name="Casacuberta E."/>
            <person name="Monfort A."/>
            <person name="Argiriou A."/>
            <person name="Flores M."/>
            <person name="Liguori R."/>
            <person name="Vitale D."/>
            <person name="Mannhaupt G."/>
            <person name="Haase D."/>
            <person name="Schoof H."/>
            <person name="Rudd S."/>
            <person name="Zaccaria P."/>
            <person name="Mewes H.-W."/>
            <person name="Mayer K.F.X."/>
            <person name="Kaul S."/>
            <person name="Town C.D."/>
            <person name="Koo H.L."/>
            <person name="Tallon L.J."/>
            <person name="Jenkins J."/>
            <person name="Rooney T."/>
            <person name="Rizzo M."/>
            <person name="Walts A."/>
            <person name="Utterback T."/>
            <person name="Fujii C.Y."/>
            <person name="Shea T.P."/>
            <person name="Creasy T.H."/>
            <person name="Haas B."/>
            <person name="Maiti R."/>
            <person name="Wu D."/>
            <person name="Peterson J."/>
            <person name="Van Aken S."/>
            <person name="Pai G."/>
            <person name="Militscher J."/>
            <person name="Sellers P."/>
            <person name="Gill J.E."/>
            <person name="Feldblyum T.V."/>
            <person name="Preuss D."/>
            <person name="Lin X."/>
            <person name="Nierman W.C."/>
            <person name="Salzberg S.L."/>
            <person name="White O."/>
            <person name="Venter J.C."/>
            <person name="Fraser C.M."/>
            <person name="Kaneko T."/>
            <person name="Nakamura Y."/>
            <person name="Sato S."/>
            <person name="Kato T."/>
            <person name="Asamizu E."/>
            <person name="Sasamoto S."/>
            <person name="Kimura T."/>
            <person name="Idesawa K."/>
            <person name="Kawashima K."/>
            <person name="Kishida Y."/>
            <person name="Kiyokawa C."/>
            <person name="Kohara M."/>
            <person name="Matsumoto M."/>
            <person name="Matsuno A."/>
            <person name="Muraki A."/>
            <person name="Nakayama S."/>
            <person name="Nakazaki N."/>
            <person name="Shinpo S."/>
            <person name="Takeuchi C."/>
            <person name="Wada T."/>
            <person name="Watanabe A."/>
            <person name="Yamada M."/>
            <person name="Yasuda M."/>
            <person name="Tabata S."/>
        </authorList>
    </citation>
    <scope>NUCLEOTIDE SEQUENCE [LARGE SCALE GENOMIC DNA]</scope>
    <source>
        <strain>cv. Columbia</strain>
    </source>
</reference>
<reference key="2">
    <citation type="journal article" date="2017" name="Plant J.">
        <title>Araport11: a complete reannotation of the Arabidopsis thaliana reference genome.</title>
        <authorList>
            <person name="Cheng C.Y."/>
            <person name="Krishnakumar V."/>
            <person name="Chan A.P."/>
            <person name="Thibaud-Nissen F."/>
            <person name="Schobel S."/>
            <person name="Town C.D."/>
        </authorList>
    </citation>
    <scope>GENOME REANNOTATION</scope>
    <source>
        <strain>cv. Columbia</strain>
    </source>
</reference>
<reference key="3">
    <citation type="submission" date="2004-01" db="EMBL/GenBank/DDBJ databases">
        <title>Arabidopsis cDNA clones.</title>
        <authorList>
            <person name="Cheuk R."/>
            <person name="Chen H."/>
            <person name="Kim C.J."/>
            <person name="Shinn P."/>
            <person name="Ecker J.R."/>
        </authorList>
    </citation>
    <scope>NUCLEOTIDE SEQUENCE [LARGE SCALE MRNA]</scope>
</reference>
<reference key="4">
    <citation type="journal article" date="2010" name="Science">
        <title>Secreted peptide signals required for maintenance of root stem cell niche in Arabidopsis.</title>
        <authorList>
            <person name="Matsuzaki Y."/>
            <person name="Ogawa-Ohnishi M."/>
            <person name="Mori A."/>
            <person name="Matsubayashi Y."/>
        </authorList>
    </citation>
    <scope>FUNCTION</scope>
    <scope>GENE FAMILY</scope>
    <scope>NOMENCLATURE</scope>
</reference>
<reference key="5">
    <citation type="journal article" date="2012" name="Proc. Natl. Acad. Sci. U.S.A.">
        <title>CLE-like (CLEL) peptides control the pattern of root growth and lateral root development in Arabidopsis.</title>
        <authorList>
            <person name="Meng L."/>
            <person name="Buchanan B.B."/>
            <person name="Feldman L.J."/>
            <person name="Luan S."/>
        </authorList>
    </citation>
    <scope>TISSUE SPECIFICITY</scope>
    <scope>NOMENCLATURE</scope>
    <scope>GENE FAMILY</scope>
    <source>
        <strain>cv. Columbia</strain>
    </source>
</reference>
<reference key="6">
    <citation type="journal article" date="2013" name="Plant Physiol.">
        <title>Transcriptional and functional classification of the GOLVEN/ROOT GROWTH FACTOR/CLE-like signaling peptides reveals their role in lateral root and hair formation.</title>
        <authorList>
            <person name="Fernandez A."/>
            <person name="Drozdzecki A."/>
            <person name="Hoogewijs K."/>
            <person name="Nguyen A."/>
            <person name="Beeckman T."/>
            <person name="Madder A."/>
            <person name="Hilson P."/>
        </authorList>
    </citation>
    <scope>FUNCTION</scope>
    <scope>DISRUPTION PHENOTYPE</scope>
    <scope>TISSUE SPECIFICITY</scope>
    <scope>DEVELOPMENTAL STAGE</scope>
    <source>
        <strain>cv. Columbia</strain>
    </source>
</reference>
<sequence length="102" mass="11972">MEMKKWSYANLITLALLFLFFIILLLAFQGGSRDDDHQHVHVAIRTKDISMGRKLKSLKPINPTKKNGFEYPDQGSHDVQEREVYVELRDYGQRKYKPPVHN</sequence>
<protein>
    <recommendedName>
        <fullName evidence="12">Protein GOLVEN 4</fullName>
    </recommendedName>
    <alternativeName>
        <fullName evidence="11">CLAVATA3/ESR (CLE)-related protein CLEL4</fullName>
        <shortName evidence="11">CLE-Like protein 4</shortName>
    </alternativeName>
    <alternativeName>
        <fullName evidence="10">Root meristem growth factor 7</fullName>
        <shortName evidence="10">AtRGF7</shortName>
    </alternativeName>
    <component>
        <recommendedName>
            <fullName evidence="12">GLV4p</fullName>
        </recommendedName>
    </component>
</protein>
<accession>Q6NNL3</accession>
<accession>Q9SRU0</accession>
<dbReference type="EMBL" id="AC009755">
    <property type="protein sequence ID" value="AAF02114.1"/>
    <property type="status" value="ALT_SEQ"/>
    <property type="molecule type" value="Genomic_DNA"/>
</dbReference>
<dbReference type="EMBL" id="CP002686">
    <property type="protein sequence ID" value="AEE73782.1"/>
    <property type="molecule type" value="Genomic_DNA"/>
</dbReference>
<dbReference type="EMBL" id="BT010792">
    <property type="protein sequence ID" value="AAR24159.1"/>
    <property type="molecule type" value="mRNA"/>
</dbReference>
<dbReference type="EMBL" id="BT011273">
    <property type="protein sequence ID" value="AAR92309.1"/>
    <property type="molecule type" value="mRNA"/>
</dbReference>
<dbReference type="RefSeq" id="NP_186873.2">
    <property type="nucleotide sequence ID" value="NM_111091.5"/>
</dbReference>
<dbReference type="SMR" id="Q6NNL3"/>
<dbReference type="STRING" id="3702.Q6NNL3"/>
<dbReference type="PaxDb" id="3702-AT3G02240.1"/>
<dbReference type="ProteomicsDB" id="236997"/>
<dbReference type="EnsemblPlants" id="AT3G02240.1">
    <property type="protein sequence ID" value="AT3G02240.1"/>
    <property type="gene ID" value="AT3G02240"/>
</dbReference>
<dbReference type="GeneID" id="820386"/>
<dbReference type="Gramene" id="AT3G02240.1">
    <property type="protein sequence ID" value="AT3G02240.1"/>
    <property type="gene ID" value="AT3G02240"/>
</dbReference>
<dbReference type="KEGG" id="ath:AT3G02240"/>
<dbReference type="Araport" id="AT3G02240"/>
<dbReference type="TAIR" id="AT3G02240">
    <property type="gene designation" value="RGF7"/>
</dbReference>
<dbReference type="HOGENOM" id="CLU_2187525_0_0_1"/>
<dbReference type="InParanoid" id="Q6NNL3"/>
<dbReference type="OrthoDB" id="10292085at2759"/>
<dbReference type="PhylomeDB" id="Q6NNL3"/>
<dbReference type="PRO" id="PR:Q6NNL3"/>
<dbReference type="Proteomes" id="UP000006548">
    <property type="component" value="Chromosome 3"/>
</dbReference>
<dbReference type="ExpressionAtlas" id="Q6NNL3">
    <property type="expression patterns" value="baseline and differential"/>
</dbReference>
<dbReference type="GO" id="GO:0005615">
    <property type="term" value="C:extracellular space"/>
    <property type="evidence" value="ECO:0000250"/>
    <property type="project" value="UniProtKB"/>
</dbReference>
<dbReference type="GO" id="GO:0008083">
    <property type="term" value="F:growth factor activity"/>
    <property type="evidence" value="ECO:0000314"/>
    <property type="project" value="UniProtKB"/>
</dbReference>
<dbReference type="GO" id="GO:0030154">
    <property type="term" value="P:cell differentiation"/>
    <property type="evidence" value="ECO:0000314"/>
    <property type="project" value="UniProtKB"/>
</dbReference>
<dbReference type="GO" id="GO:0008284">
    <property type="term" value="P:positive regulation of cell population proliferation"/>
    <property type="evidence" value="ECO:0000314"/>
    <property type="project" value="UniProtKB"/>
</dbReference>
<dbReference type="GO" id="GO:0009786">
    <property type="term" value="P:regulation of asymmetric cell division"/>
    <property type="evidence" value="ECO:0000250"/>
    <property type="project" value="UniProtKB"/>
</dbReference>
<dbReference type="GO" id="GO:2000023">
    <property type="term" value="P:regulation of lateral root development"/>
    <property type="evidence" value="ECO:0000250"/>
    <property type="project" value="UniProtKB"/>
</dbReference>
<dbReference type="GO" id="GO:0010082">
    <property type="term" value="P:regulation of root meristem growth"/>
    <property type="evidence" value="ECO:0000250"/>
    <property type="project" value="UniProtKB"/>
</dbReference>
<dbReference type="GO" id="GO:2000067">
    <property type="term" value="P:regulation of root morphogenesis"/>
    <property type="evidence" value="ECO:0000250"/>
    <property type="project" value="UniProtKB"/>
</dbReference>
<proteinExistence type="evidence at transcript level"/>
<comment type="function">
    <molecule>GLV4p</molecule>
    <text evidence="3 7 9">Signaling peptide (root growth factor) that promotes root hairs formation and growth (PubMed:23370719). Maintains the postembryonic root stem cell niche (PubMed:20798316). Regulates the pattern of root growth and lateral root development by modulating the length and the number of cortical cells in the root apical meristem (RAM), and the anticlinal asymmetric cell divisions in lateral root initiation cells (By similarity).</text>
</comment>
<comment type="subunit">
    <molecule>GLV4p</molecule>
    <text evidence="4">Binds to LRR receptor-like serine/threonine-protein kinases to trigger their dimerization with SERK proteins and subsequent signaling.</text>
</comment>
<comment type="subcellular location">
    <molecule>GLV4p</molecule>
    <subcellularLocation>
        <location evidence="2">Secreted</location>
    </subcellularLocation>
</comment>
<comment type="tissue specificity">
    <text evidence="8 9">Expressed in roots and sepals.</text>
</comment>
<comment type="developmental stage">
    <text evidence="9">In roots, present in the root portion above the meristem, mainly in the root elongation zone and the proximal region of the differentiation zone; restricted to the epidermis (PubMed:23370719). Induced during lateral root formation in mature lateral roots (PubMed:23370719).</text>
</comment>
<comment type="disruption phenotype">
    <text evidence="9">Shorter root hairs.</text>
</comment>
<comment type="miscellaneous">
    <text evidence="14">'Golven' means irregular waves in Dutch.</text>
</comment>
<comment type="similarity">
    <text evidence="13">Belongs to the RGF family.</text>
</comment>
<comment type="sequence caution" evidence="13">
    <conflict type="erroneous gene model prediction">
        <sequence resource="EMBL-CDS" id="AAF02114"/>
    </conflict>
</comment>